<feature type="chain" id="PRO_0000324119" description="Rho guanine nucleotide exchange factor 28">
    <location>
        <begin position="1"/>
        <end position="1705"/>
    </location>
</feature>
<feature type="domain" description="DH" evidence="4">
    <location>
        <begin position="849"/>
        <end position="1044"/>
    </location>
</feature>
<feature type="domain" description="PH" evidence="5">
    <location>
        <begin position="1086"/>
        <end position="1188"/>
    </location>
</feature>
<feature type="zinc finger region" description="Phorbol-ester/DAG-type" evidence="6">
    <location>
        <begin position="652"/>
        <end position="699"/>
    </location>
</feature>
<feature type="region of interest" description="Disordered" evidence="7">
    <location>
        <begin position="287"/>
        <end position="316"/>
    </location>
</feature>
<feature type="region of interest" description="Disordered" evidence="7">
    <location>
        <begin position="473"/>
        <end position="524"/>
    </location>
</feature>
<feature type="region of interest" description="Disordered" evidence="7">
    <location>
        <begin position="630"/>
        <end position="649"/>
    </location>
</feature>
<feature type="region of interest" description="Disordered" evidence="7">
    <location>
        <begin position="710"/>
        <end position="800"/>
    </location>
</feature>
<feature type="region of interest" description="Disordered" evidence="7">
    <location>
        <begin position="1187"/>
        <end position="1207"/>
    </location>
</feature>
<feature type="region of interest" description="Interaction with PTK2/FAK1; required for regulation of axonal branching and synapse formation" evidence="1">
    <location>
        <begin position="1295"/>
        <end position="1304"/>
    </location>
</feature>
<feature type="region of interest" description="Disordered" evidence="7">
    <location>
        <begin position="1312"/>
        <end position="1339"/>
    </location>
</feature>
<feature type="region of interest" description="Mediates cytoplasmic retention and interaction with YWHAH" evidence="1">
    <location>
        <begin position="1372"/>
        <end position="1383"/>
    </location>
</feature>
<feature type="region of interest" description="Interaction with microtubules" evidence="1">
    <location>
        <begin position="1425"/>
        <end position="1705"/>
    </location>
</feature>
<feature type="region of interest" description="RNA-binding" evidence="1">
    <location>
        <begin position="1496"/>
        <end position="1527"/>
    </location>
</feature>
<feature type="region of interest" description="Mediates cytoplasmic retention and interaction with MAPK8IP1" evidence="1">
    <location>
        <begin position="1566"/>
        <end position="1579"/>
    </location>
</feature>
<feature type="region of interest" description="Disordered" evidence="7">
    <location>
        <begin position="1638"/>
        <end position="1705"/>
    </location>
</feature>
<feature type="coiled-coil region" evidence="3">
    <location>
        <begin position="1488"/>
        <end position="1525"/>
    </location>
</feature>
<feature type="compositionally biased region" description="Polar residues" evidence="7">
    <location>
        <begin position="501"/>
        <end position="510"/>
    </location>
</feature>
<feature type="compositionally biased region" description="Basic and acidic residues" evidence="7">
    <location>
        <begin position="640"/>
        <end position="649"/>
    </location>
</feature>
<feature type="compositionally biased region" description="Polar residues" evidence="7">
    <location>
        <begin position="710"/>
        <end position="721"/>
    </location>
</feature>
<feature type="compositionally biased region" description="Polar residues" evidence="7">
    <location>
        <begin position="759"/>
        <end position="775"/>
    </location>
</feature>
<feature type="compositionally biased region" description="Basic and acidic residues" evidence="7">
    <location>
        <begin position="777"/>
        <end position="791"/>
    </location>
</feature>
<feature type="compositionally biased region" description="Basic and acidic residues" evidence="7">
    <location>
        <begin position="1191"/>
        <end position="1207"/>
    </location>
</feature>
<feature type="compositionally biased region" description="Basic and acidic residues" evidence="7">
    <location>
        <begin position="1641"/>
        <end position="1655"/>
    </location>
</feature>
<feature type="compositionally biased region" description="Polar residues" evidence="7">
    <location>
        <begin position="1656"/>
        <end position="1669"/>
    </location>
</feature>
<feature type="compositionally biased region" description="Basic and acidic residues" evidence="7">
    <location>
        <begin position="1688"/>
        <end position="1699"/>
    </location>
</feature>
<feature type="modified residue" description="Phosphoserine" evidence="2">
    <location>
        <position position="313"/>
    </location>
</feature>
<feature type="modified residue" description="Phosphoserine" evidence="2">
    <location>
        <position position="478"/>
    </location>
</feature>
<feature type="modified residue" description="Phosphoserine" evidence="16">
    <location>
        <position position="624"/>
    </location>
</feature>
<feature type="modified residue" description="Phosphoserine" evidence="17">
    <location>
        <position position="1538"/>
    </location>
</feature>
<feature type="splice variant" id="VSP_044737" description="In isoform 5." evidence="13">
    <original>MELSCSEAPLYGQMMIYAKFDKNVYLPE</original>
    <variation>MDSDSDSPFNYSWPSFPKMKIRRRTSKQ</variation>
    <location>
        <begin position="1"/>
        <end position="28"/>
    </location>
</feature>
<feature type="splice variant" id="VSP_044738" description="In isoform 5." evidence="13">
    <location>
        <begin position="29"/>
        <end position="341"/>
    </location>
</feature>
<feature type="splice variant" id="VSP_032140" description="In isoform 2." evidence="12">
    <original>EQRAYSLSEPPRENRIQEEE</original>
    <variation>GKHHLTFGFENTLFQNRFFS</variation>
    <location>
        <begin position="583"/>
        <end position="602"/>
    </location>
</feature>
<feature type="splice variant" id="VSP_032141" description="In isoform 2." evidence="12">
    <location>
        <begin position="603"/>
        <end position="1705"/>
    </location>
</feature>
<feature type="splice variant" id="VSP_032142" description="In isoform 3." evidence="13">
    <location>
        <begin position="1282"/>
        <end position="1325"/>
    </location>
</feature>
<feature type="splice variant" id="VSP_032143" description="In isoform 3 and isoform 6." evidence="13 14">
    <original>N</original>
    <variation>NGSSMTKCSCTLTSPPGLWTGTTSTLK</variation>
    <location>
        <position position="1649"/>
    </location>
</feature>
<feature type="splice variant" id="VSP_032144" description="In isoform 4." evidence="15">
    <original>DLDTSHTESPTPHDSNSHRPQLQAFITEAKLNLPTRTMTRQDGETGDGAKENIVYL</original>
    <variation>GN</variation>
    <location>
        <begin position="1650"/>
        <end position="1705"/>
    </location>
</feature>
<feature type="sequence variant" id="VAR_039657" description="In dbSNP:rs12659447.">
    <original>R</original>
    <variation>M</variation>
    <location>
        <position position="98"/>
    </location>
</feature>
<feature type="sequence variant" id="VAR_039658" description="In dbSNP:rs7714670.">
    <original>W</original>
    <variation>R</variation>
    <location>
        <position position="225"/>
    </location>
</feature>
<feature type="sequence variant" id="VAR_039659" description="In dbSNP:rs6453022." evidence="10">
    <original>P</original>
    <variation>Q</variation>
    <location>
        <position position="284"/>
    </location>
</feature>
<feature type="sequence variant" id="VAR_039660" description="In dbSNP:rs2973571.">
    <original>S</original>
    <variation>L</variation>
    <location>
        <position position="544"/>
    </location>
</feature>
<feature type="sequence variant" id="VAR_039661" description="In dbSNP:rs2973566.">
    <original>R</original>
    <variation>K</variation>
    <location>
        <position position="585"/>
    </location>
</feature>
<feature type="sequence variant" id="VAR_039662" description="In dbSNP:rs2973558.">
    <original>H</original>
    <variation>N</variation>
    <location>
        <position position="780"/>
    </location>
</feature>
<feature type="sequence variant" id="VAR_039663" description="In dbSNP:rs17634865.">
    <original>P</original>
    <variation>S</variation>
    <location>
        <position position="1548"/>
    </location>
</feature>
<feature type="sequence variant" id="VAR_039664" description="In dbSNP:rs1478453." evidence="9 10">
    <original>H</original>
    <variation>Q</variation>
    <location>
        <position position="1640"/>
    </location>
</feature>
<feature type="sequence conflict" description="In Ref. 2; BAB15141." evidence="15" ref="2">
    <original>E</original>
    <variation>G</variation>
    <location>
        <position position="1450"/>
    </location>
</feature>
<feature type="sequence conflict" description="In Ref. 2; BAB15141." evidence="15" ref="2">
    <original>P</original>
    <variation>S</variation>
    <location>
        <position position="1540"/>
    </location>
</feature>
<feature type="sequence conflict" description="In Ref. 4; AAH12946." evidence="15" ref="4">
    <original>S</original>
    <variation>F</variation>
    <location>
        <position position="1598"/>
    </location>
</feature>
<feature type="sequence conflict" description="In Ref. 4; AAH12946." evidence="15" ref="4">
    <original>K</original>
    <variation>L</variation>
    <location>
        <position position="1613"/>
    </location>
</feature>
<feature type="sequence conflict" description="In Ref. 4; AAH12946." evidence="15" ref="4">
    <original>S</original>
    <variation>L</variation>
    <location>
        <position position="1620"/>
    </location>
</feature>
<feature type="helix" evidence="18">
    <location>
        <begin position="1052"/>
        <end position="1060"/>
    </location>
</feature>
<feature type="strand" evidence="18">
    <location>
        <begin position="1066"/>
        <end position="1068"/>
    </location>
</feature>
<feature type="strand" evidence="18">
    <location>
        <begin position="1074"/>
        <end position="1076"/>
    </location>
</feature>
<feature type="helix" evidence="18">
    <location>
        <begin position="1077"/>
        <end position="1080"/>
    </location>
</feature>
<feature type="strand" evidence="18">
    <location>
        <begin position="1088"/>
        <end position="1096"/>
    </location>
</feature>
<feature type="strand" evidence="18">
    <location>
        <begin position="1102"/>
        <end position="1109"/>
    </location>
</feature>
<feature type="strand" evidence="18">
    <location>
        <begin position="1114"/>
        <end position="1120"/>
    </location>
</feature>
<feature type="strand" evidence="18">
    <location>
        <begin position="1123"/>
        <end position="1126"/>
    </location>
</feature>
<feature type="strand" evidence="18">
    <location>
        <begin position="1134"/>
        <end position="1136"/>
    </location>
</feature>
<feature type="helix" evidence="18">
    <location>
        <begin position="1138"/>
        <end position="1140"/>
    </location>
</feature>
<feature type="strand" evidence="18">
    <location>
        <begin position="1141"/>
        <end position="1145"/>
    </location>
</feature>
<feature type="strand" evidence="18">
    <location>
        <begin position="1152"/>
        <end position="1157"/>
    </location>
</feature>
<feature type="strand" evidence="18">
    <location>
        <begin position="1164"/>
        <end position="1169"/>
    </location>
</feature>
<feature type="helix" evidence="18">
    <location>
        <begin position="1173"/>
        <end position="1184"/>
    </location>
</feature>
<name>ARG28_HUMAN</name>
<dbReference type="EMBL" id="AB082529">
    <property type="protein sequence ID" value="BAC02707.1"/>
    <property type="status" value="ALT_INIT"/>
    <property type="molecule type" value="mRNA"/>
</dbReference>
<dbReference type="EMBL" id="AK025470">
    <property type="protein sequence ID" value="BAB15141.1"/>
    <property type="molecule type" value="mRNA"/>
</dbReference>
<dbReference type="EMBL" id="AK025816">
    <property type="protein sequence ID" value="BAB15243.1"/>
    <property type="status" value="ALT_INIT"/>
    <property type="molecule type" value="mRNA"/>
</dbReference>
<dbReference type="EMBL" id="AK094713">
    <property type="protein sequence ID" value="BAC04405.1"/>
    <property type="molecule type" value="mRNA"/>
</dbReference>
<dbReference type="EMBL" id="AK304761">
    <property type="protein sequence ID" value="BAG65516.1"/>
    <property type="molecule type" value="mRNA"/>
</dbReference>
<dbReference type="EMBL" id="AC008387">
    <property type="status" value="NOT_ANNOTATED_CDS"/>
    <property type="molecule type" value="Genomic_DNA"/>
</dbReference>
<dbReference type="EMBL" id="AC026702">
    <property type="status" value="NOT_ANNOTATED_CDS"/>
    <property type="molecule type" value="Genomic_DNA"/>
</dbReference>
<dbReference type="EMBL" id="AC091868">
    <property type="status" value="NOT_ANNOTATED_CDS"/>
    <property type="molecule type" value="Genomic_DNA"/>
</dbReference>
<dbReference type="EMBL" id="AC093283">
    <property type="status" value="NOT_ANNOTATED_CDS"/>
    <property type="molecule type" value="Genomic_DNA"/>
</dbReference>
<dbReference type="EMBL" id="BC012946">
    <property type="protein sequence ID" value="AAH12946.1"/>
    <property type="status" value="ALT_INIT"/>
    <property type="molecule type" value="mRNA"/>
</dbReference>
<dbReference type="EMBL" id="BC157846">
    <property type="protein sequence ID" value="AAI57847.1"/>
    <property type="molecule type" value="mRNA"/>
</dbReference>
<dbReference type="EMBL" id="BC171850">
    <property type="protein sequence ID" value="AAI71850.1"/>
    <property type="molecule type" value="mRNA"/>
</dbReference>
<dbReference type="CCDS" id="CCDS47231.2">
    <molecule id="Q8N1W1-6"/>
</dbReference>
<dbReference type="CCDS" id="CCDS54870.1">
    <molecule id="Q8N1W1-1"/>
</dbReference>
<dbReference type="CCDS" id="CCDS58957.1">
    <molecule id="Q8N1W1-5"/>
</dbReference>
<dbReference type="CCDS" id="CCDS93734.1">
    <molecule id="Q8N1W1-4"/>
</dbReference>
<dbReference type="RefSeq" id="NP_001073948.2">
    <molecule id="Q8N1W1-6"/>
    <property type="nucleotide sequence ID" value="NM_001080479.3"/>
</dbReference>
<dbReference type="RefSeq" id="NP_001171164.1">
    <molecule id="Q8N1W1-1"/>
    <property type="nucleotide sequence ID" value="NM_001177693.2"/>
</dbReference>
<dbReference type="RefSeq" id="NP_001231293.1">
    <molecule id="Q8N1W1-5"/>
    <property type="nucleotide sequence ID" value="NM_001244364.2"/>
</dbReference>
<dbReference type="RefSeq" id="NP_001375007.1">
    <molecule id="Q8N1W1-4"/>
    <property type="nucleotide sequence ID" value="NM_001388078.1"/>
</dbReference>
<dbReference type="RefSeq" id="XP_011541848.1">
    <property type="nucleotide sequence ID" value="XM_011543546.1"/>
</dbReference>
<dbReference type="PDB" id="6BC0">
    <property type="method" value="X-ray"/>
    <property type="resolution" value="2.20 A"/>
    <property type="chains" value="A=1049-1194"/>
</dbReference>
<dbReference type="PDB" id="6BC1">
    <property type="method" value="X-ray"/>
    <property type="resolution" value="2.90 A"/>
    <property type="chains" value="C/D=1049-1194"/>
</dbReference>
<dbReference type="PDBsum" id="6BC0"/>
<dbReference type="PDBsum" id="6BC1"/>
<dbReference type="SMR" id="Q8N1W1"/>
<dbReference type="BioGRID" id="122127">
    <property type="interactions" value="32"/>
</dbReference>
<dbReference type="FunCoup" id="Q8N1W1">
    <property type="interactions" value="978"/>
</dbReference>
<dbReference type="IntAct" id="Q8N1W1">
    <property type="interactions" value="21"/>
</dbReference>
<dbReference type="MINT" id="Q8N1W1"/>
<dbReference type="STRING" id="9606.ENSP00000441913"/>
<dbReference type="iPTMnet" id="Q8N1W1"/>
<dbReference type="PhosphoSitePlus" id="Q8N1W1"/>
<dbReference type="BioMuta" id="ARHGEF28"/>
<dbReference type="DMDM" id="327478563"/>
<dbReference type="jPOST" id="Q8N1W1"/>
<dbReference type="MassIVE" id="Q8N1W1"/>
<dbReference type="PaxDb" id="9606-ENSP00000441913"/>
<dbReference type="PeptideAtlas" id="Q8N1W1"/>
<dbReference type="ProteomicsDB" id="19386"/>
<dbReference type="ProteomicsDB" id="6165"/>
<dbReference type="ProteomicsDB" id="71639">
    <molecule id="Q8N1W1-1"/>
</dbReference>
<dbReference type="ProteomicsDB" id="71640">
    <molecule id="Q8N1W1-2"/>
</dbReference>
<dbReference type="ProteomicsDB" id="71641">
    <molecule id="Q8N1W1-3"/>
</dbReference>
<dbReference type="ProteomicsDB" id="71642">
    <molecule id="Q8N1W1-4"/>
</dbReference>
<dbReference type="Antibodypedia" id="48924">
    <property type="antibodies" value="25 antibodies from 11 providers"/>
</dbReference>
<dbReference type="DNASU" id="64283"/>
<dbReference type="Ensembl" id="ENST00000296794.10">
    <molecule id="Q8N1W1-4"/>
    <property type="protein sequence ID" value="ENSP00000296794.6"/>
    <property type="gene ID" value="ENSG00000214944.10"/>
</dbReference>
<dbReference type="Ensembl" id="ENST00000296799.8">
    <molecule id="Q8N1W1-5"/>
    <property type="protein sequence ID" value="ENSP00000296799.4"/>
    <property type="gene ID" value="ENSG00000214944.10"/>
</dbReference>
<dbReference type="Ensembl" id="ENST00000426542.6">
    <molecule id="Q8N1W1-1"/>
    <property type="protein sequence ID" value="ENSP00000412175.2"/>
    <property type="gene ID" value="ENSG00000214944.10"/>
</dbReference>
<dbReference type="Ensembl" id="ENST00000437974.5">
    <molecule id="Q8N1W1-6"/>
    <property type="protein sequence ID" value="ENSP00000411459.1"/>
    <property type="gene ID" value="ENSG00000214944.10"/>
</dbReference>
<dbReference type="Ensembl" id="ENST00000513042.7">
    <molecule id="Q8N1W1-1"/>
    <property type="protein sequence ID" value="ENSP00000441436.1"/>
    <property type="gene ID" value="ENSG00000214944.10"/>
</dbReference>
<dbReference type="Ensembl" id="ENST00000545377.5">
    <molecule id="Q8N1W1-6"/>
    <property type="protein sequence ID" value="ENSP00000441913.1"/>
    <property type="gene ID" value="ENSG00000214944.10"/>
</dbReference>
<dbReference type="GeneID" id="64283"/>
<dbReference type="KEGG" id="hsa:64283"/>
<dbReference type="MANE-Select" id="ENST00000513042.7">
    <property type="protein sequence ID" value="ENSP00000441436.1"/>
    <property type="RefSeq nucleotide sequence ID" value="NM_001177693.2"/>
    <property type="RefSeq protein sequence ID" value="NP_001171164.1"/>
</dbReference>
<dbReference type="UCSC" id="uc010izf.4">
    <molecule id="Q8N1W1-1"/>
    <property type="organism name" value="human"/>
</dbReference>
<dbReference type="AGR" id="HGNC:30322"/>
<dbReference type="CTD" id="64283"/>
<dbReference type="DisGeNET" id="64283"/>
<dbReference type="GeneCards" id="ARHGEF28"/>
<dbReference type="HGNC" id="HGNC:30322">
    <property type="gene designation" value="ARHGEF28"/>
</dbReference>
<dbReference type="HPA" id="ENSG00000214944">
    <property type="expression patterns" value="Tissue enhanced (kidney)"/>
</dbReference>
<dbReference type="MalaCards" id="ARHGEF28"/>
<dbReference type="MIM" id="612790">
    <property type="type" value="gene"/>
</dbReference>
<dbReference type="neXtProt" id="NX_Q8N1W1"/>
<dbReference type="OpenTargets" id="ENSG00000214944"/>
<dbReference type="VEuPathDB" id="HostDB:ENSG00000214944"/>
<dbReference type="eggNOG" id="KOG3520">
    <property type="taxonomic scope" value="Eukaryota"/>
</dbReference>
<dbReference type="eggNOG" id="KOG4305">
    <property type="taxonomic scope" value="Eukaryota"/>
</dbReference>
<dbReference type="GeneTree" id="ENSGT00940000155831"/>
<dbReference type="HOGENOM" id="CLU_002466_2_1_1"/>
<dbReference type="InParanoid" id="Q8N1W1"/>
<dbReference type="OMA" id="SFCHENS"/>
<dbReference type="OrthoDB" id="9536944at2759"/>
<dbReference type="PAN-GO" id="Q8N1W1">
    <property type="GO annotations" value="2 GO annotations based on evolutionary models"/>
</dbReference>
<dbReference type="PhylomeDB" id="Q8N1W1"/>
<dbReference type="TreeFam" id="TF334740"/>
<dbReference type="PathwayCommons" id="Q8N1W1"/>
<dbReference type="Reactome" id="R-HSA-3928662">
    <property type="pathway name" value="EPHB-mediated forward signaling"/>
</dbReference>
<dbReference type="Reactome" id="R-HSA-8980692">
    <property type="pathway name" value="RHOA GTPase cycle"/>
</dbReference>
<dbReference type="Reactome" id="R-HSA-9013026">
    <property type="pathway name" value="RHOB GTPase cycle"/>
</dbReference>
<dbReference type="Reactome" id="R-HSA-9013106">
    <property type="pathway name" value="RHOC GTPase cycle"/>
</dbReference>
<dbReference type="SignaLink" id="Q8N1W1"/>
<dbReference type="SIGNOR" id="Q8N1W1"/>
<dbReference type="BioGRID-ORCS" id="64283">
    <property type="hits" value="19 hits in 1145 CRISPR screens"/>
</dbReference>
<dbReference type="ChiTaRS" id="ARHGEF28">
    <property type="organism name" value="human"/>
</dbReference>
<dbReference type="GenomeRNAi" id="64283"/>
<dbReference type="Pharos" id="Q8N1W1">
    <property type="development level" value="Tbio"/>
</dbReference>
<dbReference type="PRO" id="PR:Q8N1W1"/>
<dbReference type="Proteomes" id="UP000005640">
    <property type="component" value="Chromosome 5"/>
</dbReference>
<dbReference type="RNAct" id="Q8N1W1">
    <property type="molecule type" value="protein"/>
</dbReference>
<dbReference type="Bgee" id="ENSG00000214944">
    <property type="expression patterns" value="Expressed in sural nerve and 167 other cell types or tissues"/>
</dbReference>
<dbReference type="ExpressionAtlas" id="Q8N1W1">
    <property type="expression patterns" value="baseline and differential"/>
</dbReference>
<dbReference type="GO" id="GO:0005829">
    <property type="term" value="C:cytosol"/>
    <property type="evidence" value="ECO:0000304"/>
    <property type="project" value="Reactome"/>
</dbReference>
<dbReference type="GO" id="GO:0005886">
    <property type="term" value="C:plasma membrane"/>
    <property type="evidence" value="ECO:0007669"/>
    <property type="project" value="UniProtKB-SubCell"/>
</dbReference>
<dbReference type="GO" id="GO:0005085">
    <property type="term" value="F:guanyl-nucleotide exchange factor activity"/>
    <property type="evidence" value="ECO:0000269"/>
    <property type="project" value="Reactome"/>
</dbReference>
<dbReference type="GO" id="GO:0003723">
    <property type="term" value="F:RNA binding"/>
    <property type="evidence" value="ECO:0007669"/>
    <property type="project" value="UniProtKB-KW"/>
</dbReference>
<dbReference type="GO" id="GO:0008270">
    <property type="term" value="F:zinc ion binding"/>
    <property type="evidence" value="ECO:0007669"/>
    <property type="project" value="UniProtKB-KW"/>
</dbReference>
<dbReference type="GO" id="GO:0000902">
    <property type="term" value="P:cell morphogenesis"/>
    <property type="evidence" value="ECO:0000318"/>
    <property type="project" value="GO_Central"/>
</dbReference>
<dbReference type="GO" id="GO:0021955">
    <property type="term" value="P:central nervous system neuron axonogenesis"/>
    <property type="evidence" value="ECO:0007669"/>
    <property type="project" value="Ensembl"/>
</dbReference>
<dbReference type="GO" id="GO:0048013">
    <property type="term" value="P:ephrin receptor signaling pathway"/>
    <property type="evidence" value="ECO:0000304"/>
    <property type="project" value="Reactome"/>
</dbReference>
<dbReference type="GO" id="GO:0060052">
    <property type="term" value="P:neurofilament cytoskeleton organization"/>
    <property type="evidence" value="ECO:0007669"/>
    <property type="project" value="Ensembl"/>
</dbReference>
<dbReference type="GO" id="GO:0035023">
    <property type="term" value="P:regulation of Rho protein signal transduction"/>
    <property type="evidence" value="ECO:0000318"/>
    <property type="project" value="GO_Central"/>
</dbReference>
<dbReference type="GO" id="GO:0051056">
    <property type="term" value="P:regulation of small GTPase mediated signal transduction"/>
    <property type="evidence" value="ECO:0000304"/>
    <property type="project" value="Reactome"/>
</dbReference>
<dbReference type="CDD" id="cd20876">
    <property type="entry name" value="C1_p190RhoGEF"/>
    <property type="match status" value="1"/>
</dbReference>
<dbReference type="CDD" id="cd14680">
    <property type="entry name" value="PH_p190RhoGEF"/>
    <property type="match status" value="1"/>
</dbReference>
<dbReference type="CDD" id="cd00160">
    <property type="entry name" value="RhoGEF"/>
    <property type="match status" value="1"/>
</dbReference>
<dbReference type="FunFam" id="1.20.900.10:FF:000004">
    <property type="entry name" value="Rho guanine nucleotide exchange factor 2"/>
    <property type="match status" value="1"/>
</dbReference>
<dbReference type="FunFam" id="2.30.29.30:FF:000021">
    <property type="entry name" value="Rho guanine nucleotide exchange factor 2"/>
    <property type="match status" value="1"/>
</dbReference>
<dbReference type="FunFam" id="3.30.60.20:FF:000050">
    <property type="entry name" value="Rho guanine nucleotide exchange factor 28"/>
    <property type="match status" value="1"/>
</dbReference>
<dbReference type="Gene3D" id="3.30.60.20">
    <property type="match status" value="1"/>
</dbReference>
<dbReference type="Gene3D" id="1.20.900.10">
    <property type="entry name" value="Dbl homology (DH) domain"/>
    <property type="match status" value="1"/>
</dbReference>
<dbReference type="Gene3D" id="2.30.29.30">
    <property type="entry name" value="Pleckstrin-homology domain (PH domain)/Phosphotyrosine-binding domain (PTB)"/>
    <property type="match status" value="1"/>
</dbReference>
<dbReference type="InterPro" id="IPR037819">
    <property type="entry name" value="ARHGEF28_PH"/>
</dbReference>
<dbReference type="InterPro" id="IPR046349">
    <property type="entry name" value="C1-like_sf"/>
</dbReference>
<dbReference type="InterPro" id="IPR035899">
    <property type="entry name" value="DBL_dom_sf"/>
</dbReference>
<dbReference type="InterPro" id="IPR000219">
    <property type="entry name" value="DH_dom"/>
</dbReference>
<dbReference type="InterPro" id="IPR002219">
    <property type="entry name" value="PE/DAG-bd"/>
</dbReference>
<dbReference type="InterPro" id="IPR011993">
    <property type="entry name" value="PH-like_dom_sf"/>
</dbReference>
<dbReference type="InterPro" id="IPR041020">
    <property type="entry name" value="PH_16"/>
</dbReference>
<dbReference type="InterPro" id="IPR001849">
    <property type="entry name" value="PH_domain"/>
</dbReference>
<dbReference type="InterPro" id="IPR051632">
    <property type="entry name" value="Rho_GEF"/>
</dbReference>
<dbReference type="PANTHER" id="PTHR13944">
    <property type="entry name" value="AGAP007712-PA"/>
    <property type="match status" value="1"/>
</dbReference>
<dbReference type="PANTHER" id="PTHR13944:SF22">
    <property type="entry name" value="RHO GUANINE NUCLEOTIDE EXCHANGE FACTOR 28"/>
    <property type="match status" value="1"/>
</dbReference>
<dbReference type="Pfam" id="PF00130">
    <property type="entry name" value="C1_1"/>
    <property type="match status" value="1"/>
</dbReference>
<dbReference type="Pfam" id="PF17838">
    <property type="entry name" value="PH_16"/>
    <property type="match status" value="1"/>
</dbReference>
<dbReference type="Pfam" id="PF00621">
    <property type="entry name" value="RhoGEF"/>
    <property type="match status" value="1"/>
</dbReference>
<dbReference type="SMART" id="SM00109">
    <property type="entry name" value="C1"/>
    <property type="match status" value="1"/>
</dbReference>
<dbReference type="SMART" id="SM00233">
    <property type="entry name" value="PH"/>
    <property type="match status" value="1"/>
</dbReference>
<dbReference type="SMART" id="SM00325">
    <property type="entry name" value="RhoGEF"/>
    <property type="match status" value="1"/>
</dbReference>
<dbReference type="SUPFAM" id="SSF57889">
    <property type="entry name" value="Cysteine-rich domain"/>
    <property type="match status" value="1"/>
</dbReference>
<dbReference type="SUPFAM" id="SSF48065">
    <property type="entry name" value="DBL homology domain (DH-domain)"/>
    <property type="match status" value="1"/>
</dbReference>
<dbReference type="SUPFAM" id="SSF50729">
    <property type="entry name" value="PH domain-like"/>
    <property type="match status" value="1"/>
</dbReference>
<dbReference type="PROSITE" id="PS50010">
    <property type="entry name" value="DH_2"/>
    <property type="match status" value="1"/>
</dbReference>
<dbReference type="PROSITE" id="PS50003">
    <property type="entry name" value="PH_DOMAIN"/>
    <property type="match status" value="1"/>
</dbReference>
<dbReference type="PROSITE" id="PS00479">
    <property type="entry name" value="ZF_DAG_PE_1"/>
    <property type="match status" value="1"/>
</dbReference>
<dbReference type="PROSITE" id="PS50081">
    <property type="entry name" value="ZF_DAG_PE_2"/>
    <property type="match status" value="1"/>
</dbReference>
<comment type="function">
    <text evidence="1">Functions as a RHOA-specific guanine nucleotide exchange factor regulating signaling pathways downstream of integrins and growth factor receptors. Functions in axonal branching, synapse formation and dendritic morphogenesis. Also functions in focal adhesion formation, cell motility and B-lymphocytes activation. May regulate NEFL expression and aggregation and play a role in apoptosis (By similarity).</text>
</comment>
<comment type="subunit">
    <text evidence="1 8 11">Homooligomer; forms cytoplasmic aggregates. Forms a complex with MAPK8 and MAPK8IP1. Interacts with RHOA. Interacts with microtubules. Interacts with YWHAE and YWHAH. Interacts with PTK2/FAK1. Interacts with NEFL (By similarity). Interacts with CTNND2; prevents interaction with RHOA.</text>
</comment>
<comment type="interaction">
    <interactant intactId="EBI-13062134">
        <id>Q8N1W1-4</id>
    </interactant>
    <interactant intactId="EBI-1049597">
        <id>P27797</id>
        <label>CALR</label>
    </interactant>
    <organismsDiffer>false</organismsDiffer>
    <experiments>3</experiments>
</comment>
<comment type="interaction">
    <interactant intactId="EBI-13062134">
        <id>Q8N1W1-4</id>
    </interactant>
    <interactant intactId="EBI-1188472">
        <id>P78358</id>
        <label>CTAG1B</label>
    </interactant>
    <organismsDiffer>false</organismsDiffer>
    <experiments>3</experiments>
</comment>
<comment type="interaction">
    <interactant intactId="EBI-13062134">
        <id>Q8N1W1-4</id>
    </interactant>
    <interactant intactId="EBI-351007">
        <id>P36957</id>
        <label>DLST</label>
    </interactant>
    <organismsDiffer>false</organismsDiffer>
    <experiments>3</experiments>
</comment>
<comment type="interaction">
    <interactant intactId="EBI-13062134">
        <id>Q8N1W1-4</id>
    </interactant>
    <interactant intactId="EBI-1055945">
        <id>Q8TDX7</id>
        <label>NEK7</label>
    </interactant>
    <organismsDiffer>false</organismsDiffer>
    <experiments>3</experiments>
</comment>
<comment type="subcellular location">
    <subcellularLocation>
        <location evidence="1">Cytoplasm</location>
    </subcellularLocation>
    <subcellularLocation>
        <location evidence="1">Cell membrane</location>
    </subcellularLocation>
    <text evidence="1">Colocalizes with the microtubule radial and cortical systems.</text>
</comment>
<comment type="alternative products">
    <event type="alternative splicing"/>
    <isoform>
        <id>Q8N1W1-1</id>
        <name>1</name>
        <sequence type="displayed"/>
    </isoform>
    <isoform>
        <id>Q8N1W1-2</id>
        <name>2</name>
        <sequence type="described" ref="VSP_032140 VSP_032141"/>
    </isoform>
    <isoform>
        <id>Q8N1W1-3</id>
        <name>3</name>
        <sequence type="described" ref="VSP_032142 VSP_032143"/>
    </isoform>
    <isoform>
        <id>Q8N1W1-4</id>
        <name>4</name>
        <sequence type="described" ref="VSP_032144"/>
    </isoform>
    <isoform>
        <id>Q8N1W1-5</id>
        <name>5</name>
        <sequence type="described" ref="VSP_044737 VSP_044738"/>
    </isoform>
    <isoform>
        <id>Q8N1W1-6</id>
        <name>6</name>
        <sequence type="described" ref="VSP_032143"/>
    </isoform>
</comment>
<comment type="PTM">
    <text evidence="1">Phosphorylated on tyrosine upon stimulation of cells by laminin.</text>
</comment>
<comment type="sequence caution" evidence="15">
    <conflict type="erroneous initiation">
        <sequence resource="EMBL-CDS" id="AAH12946"/>
    </conflict>
    <text>Truncated N-terminus.</text>
</comment>
<comment type="sequence caution" evidence="15">
    <conflict type="erroneous initiation">
        <sequence resource="EMBL-CDS" id="BAB15243"/>
    </conflict>
    <text>Extended N-terminus.</text>
</comment>
<comment type="sequence caution" evidence="15">
    <conflict type="erroneous initiation">
        <sequence resource="EMBL-CDS" id="BAC02707"/>
    </conflict>
    <text>Truncated N-terminus.</text>
</comment>
<organism>
    <name type="scientific">Homo sapiens</name>
    <name type="common">Human</name>
    <dbReference type="NCBI Taxonomy" id="9606"/>
    <lineage>
        <taxon>Eukaryota</taxon>
        <taxon>Metazoa</taxon>
        <taxon>Chordata</taxon>
        <taxon>Craniata</taxon>
        <taxon>Vertebrata</taxon>
        <taxon>Euteleostomi</taxon>
        <taxon>Mammalia</taxon>
        <taxon>Eutheria</taxon>
        <taxon>Euarchontoglires</taxon>
        <taxon>Primates</taxon>
        <taxon>Haplorrhini</taxon>
        <taxon>Catarrhini</taxon>
        <taxon>Hominidae</taxon>
        <taxon>Homo</taxon>
    </lineage>
</organism>
<protein>
    <recommendedName>
        <fullName>Rho guanine nucleotide exchange factor 28</fullName>
    </recommendedName>
    <alternativeName>
        <fullName>190 kDa guanine nucleotide exchange factor</fullName>
        <shortName>p190-RhoGEF</shortName>
        <shortName>p190RhoGEF</shortName>
    </alternativeName>
    <alternativeName>
        <fullName>Rho guanine nucleotide exchange factor</fullName>
    </alternativeName>
</protein>
<reference key="1">
    <citation type="journal article" date="2002" name="DNA Res.">
        <title>Characterization of size-fractionated cDNA libraries generated by the in vitro recombination-assisted method.</title>
        <authorList>
            <person name="Ohara O."/>
            <person name="Nagase T."/>
            <person name="Mitsui G."/>
            <person name="Kohga H."/>
            <person name="Kikuno R."/>
            <person name="Hiraoka S."/>
            <person name="Takahashi Y."/>
            <person name="Kitajima S."/>
            <person name="Saga Y."/>
            <person name="Koseki H."/>
        </authorList>
    </citation>
    <scope>NUCLEOTIDE SEQUENCE [LARGE SCALE MRNA] (ISOFORM 2)</scope>
    <source>
        <tissue>Brain</tissue>
    </source>
</reference>
<reference key="2">
    <citation type="journal article" date="2004" name="Nat. Genet.">
        <title>Complete sequencing and characterization of 21,243 full-length human cDNAs.</title>
        <authorList>
            <person name="Ota T."/>
            <person name="Suzuki Y."/>
            <person name="Nishikawa T."/>
            <person name="Otsuki T."/>
            <person name="Sugiyama T."/>
            <person name="Irie R."/>
            <person name="Wakamatsu A."/>
            <person name="Hayashi K."/>
            <person name="Sato H."/>
            <person name="Nagai K."/>
            <person name="Kimura K."/>
            <person name="Makita H."/>
            <person name="Sekine M."/>
            <person name="Obayashi M."/>
            <person name="Nishi T."/>
            <person name="Shibahara T."/>
            <person name="Tanaka T."/>
            <person name="Ishii S."/>
            <person name="Yamamoto J."/>
            <person name="Saito K."/>
            <person name="Kawai Y."/>
            <person name="Isono Y."/>
            <person name="Nakamura Y."/>
            <person name="Nagahari K."/>
            <person name="Murakami K."/>
            <person name="Yasuda T."/>
            <person name="Iwayanagi T."/>
            <person name="Wagatsuma M."/>
            <person name="Shiratori A."/>
            <person name="Sudo H."/>
            <person name="Hosoiri T."/>
            <person name="Kaku Y."/>
            <person name="Kodaira H."/>
            <person name="Kondo H."/>
            <person name="Sugawara M."/>
            <person name="Takahashi M."/>
            <person name="Kanda K."/>
            <person name="Yokoi T."/>
            <person name="Furuya T."/>
            <person name="Kikkawa E."/>
            <person name="Omura Y."/>
            <person name="Abe K."/>
            <person name="Kamihara K."/>
            <person name="Katsuta N."/>
            <person name="Sato K."/>
            <person name="Tanikawa M."/>
            <person name="Yamazaki M."/>
            <person name="Ninomiya K."/>
            <person name="Ishibashi T."/>
            <person name="Yamashita H."/>
            <person name="Murakawa K."/>
            <person name="Fujimori K."/>
            <person name="Tanai H."/>
            <person name="Kimata M."/>
            <person name="Watanabe M."/>
            <person name="Hiraoka S."/>
            <person name="Chiba Y."/>
            <person name="Ishida S."/>
            <person name="Ono Y."/>
            <person name="Takiguchi S."/>
            <person name="Watanabe S."/>
            <person name="Yosida M."/>
            <person name="Hotuta T."/>
            <person name="Kusano J."/>
            <person name="Kanehori K."/>
            <person name="Takahashi-Fujii A."/>
            <person name="Hara H."/>
            <person name="Tanase T.-O."/>
            <person name="Nomura Y."/>
            <person name="Togiya S."/>
            <person name="Komai F."/>
            <person name="Hara R."/>
            <person name="Takeuchi K."/>
            <person name="Arita M."/>
            <person name="Imose N."/>
            <person name="Musashino K."/>
            <person name="Yuuki H."/>
            <person name="Oshima A."/>
            <person name="Sasaki N."/>
            <person name="Aotsuka S."/>
            <person name="Yoshikawa Y."/>
            <person name="Matsunawa H."/>
            <person name="Ichihara T."/>
            <person name="Shiohata N."/>
            <person name="Sano S."/>
            <person name="Moriya S."/>
            <person name="Momiyama H."/>
            <person name="Satoh N."/>
            <person name="Takami S."/>
            <person name="Terashima Y."/>
            <person name="Suzuki O."/>
            <person name="Nakagawa S."/>
            <person name="Senoh A."/>
            <person name="Mizoguchi H."/>
            <person name="Goto Y."/>
            <person name="Shimizu F."/>
            <person name="Wakebe H."/>
            <person name="Hishigaki H."/>
            <person name="Watanabe T."/>
            <person name="Sugiyama A."/>
            <person name="Takemoto M."/>
            <person name="Kawakami B."/>
            <person name="Yamazaki M."/>
            <person name="Watanabe K."/>
            <person name="Kumagai A."/>
            <person name="Itakura S."/>
            <person name="Fukuzumi Y."/>
            <person name="Fujimori Y."/>
            <person name="Komiyama M."/>
            <person name="Tashiro H."/>
            <person name="Tanigami A."/>
            <person name="Fujiwara T."/>
            <person name="Ono T."/>
            <person name="Yamada K."/>
            <person name="Fujii Y."/>
            <person name="Ozaki K."/>
            <person name="Hirao M."/>
            <person name="Ohmori Y."/>
            <person name="Kawabata A."/>
            <person name="Hikiji T."/>
            <person name="Kobatake N."/>
            <person name="Inagaki H."/>
            <person name="Ikema Y."/>
            <person name="Okamoto S."/>
            <person name="Okitani R."/>
            <person name="Kawakami T."/>
            <person name="Noguchi S."/>
            <person name="Itoh T."/>
            <person name="Shigeta K."/>
            <person name="Senba T."/>
            <person name="Matsumura K."/>
            <person name="Nakajima Y."/>
            <person name="Mizuno T."/>
            <person name="Morinaga M."/>
            <person name="Sasaki M."/>
            <person name="Togashi T."/>
            <person name="Oyama M."/>
            <person name="Hata H."/>
            <person name="Watanabe M."/>
            <person name="Komatsu T."/>
            <person name="Mizushima-Sugano J."/>
            <person name="Satoh T."/>
            <person name="Shirai Y."/>
            <person name="Takahashi Y."/>
            <person name="Nakagawa K."/>
            <person name="Okumura K."/>
            <person name="Nagase T."/>
            <person name="Nomura N."/>
            <person name="Kikuchi H."/>
            <person name="Masuho Y."/>
            <person name="Yamashita R."/>
            <person name="Nakai K."/>
            <person name="Yada T."/>
            <person name="Nakamura Y."/>
            <person name="Ohara O."/>
            <person name="Isogai T."/>
            <person name="Sugano S."/>
        </authorList>
    </citation>
    <scope>NUCLEOTIDE SEQUENCE [LARGE SCALE MRNA] (ISOFORM 5)</scope>
    <scope>NUCLEOTIDE SEQUENCE [LARGE SCALE MRNA] OF 1-945 AND 977-1705 (ISOFORM 1)</scope>
    <scope>NUCLEOTIDE SEQUENCE [LARGE SCALE MRNA] OF 1037-1705 (ISOFORM 3)</scope>
    <scope>VARIANT GLN-1640</scope>
    <source>
        <tissue>Amygdala</tissue>
        <tissue>Hepatoma</tissue>
        <tissue>Kidney epithelium</tissue>
    </source>
</reference>
<reference key="3">
    <citation type="journal article" date="2004" name="Nature">
        <title>The DNA sequence and comparative analysis of human chromosome 5.</title>
        <authorList>
            <person name="Schmutz J."/>
            <person name="Martin J."/>
            <person name="Terry A."/>
            <person name="Couronne O."/>
            <person name="Grimwood J."/>
            <person name="Lowry S."/>
            <person name="Gordon L.A."/>
            <person name="Scott D."/>
            <person name="Xie G."/>
            <person name="Huang W."/>
            <person name="Hellsten U."/>
            <person name="Tran-Gyamfi M."/>
            <person name="She X."/>
            <person name="Prabhakar S."/>
            <person name="Aerts A."/>
            <person name="Altherr M."/>
            <person name="Bajorek E."/>
            <person name="Black S."/>
            <person name="Branscomb E."/>
            <person name="Caoile C."/>
            <person name="Challacombe J.F."/>
            <person name="Chan Y.M."/>
            <person name="Denys M."/>
            <person name="Detter J.C."/>
            <person name="Escobar J."/>
            <person name="Flowers D."/>
            <person name="Fotopulos D."/>
            <person name="Glavina T."/>
            <person name="Gomez M."/>
            <person name="Gonzales E."/>
            <person name="Goodstein D."/>
            <person name="Grigoriev I."/>
            <person name="Groza M."/>
            <person name="Hammon N."/>
            <person name="Hawkins T."/>
            <person name="Haydu L."/>
            <person name="Israni S."/>
            <person name="Jett J."/>
            <person name="Kadner K."/>
            <person name="Kimball H."/>
            <person name="Kobayashi A."/>
            <person name="Lopez F."/>
            <person name="Lou Y."/>
            <person name="Martinez D."/>
            <person name="Medina C."/>
            <person name="Morgan J."/>
            <person name="Nandkeshwar R."/>
            <person name="Noonan J.P."/>
            <person name="Pitluck S."/>
            <person name="Pollard M."/>
            <person name="Predki P."/>
            <person name="Priest J."/>
            <person name="Ramirez L."/>
            <person name="Retterer J."/>
            <person name="Rodriguez A."/>
            <person name="Rogers S."/>
            <person name="Salamov A."/>
            <person name="Salazar A."/>
            <person name="Thayer N."/>
            <person name="Tice H."/>
            <person name="Tsai M."/>
            <person name="Ustaszewska A."/>
            <person name="Vo N."/>
            <person name="Wheeler J."/>
            <person name="Wu K."/>
            <person name="Yang J."/>
            <person name="Dickson M."/>
            <person name="Cheng J.-F."/>
            <person name="Eichler E.E."/>
            <person name="Olsen A."/>
            <person name="Pennacchio L.A."/>
            <person name="Rokhsar D.S."/>
            <person name="Richardson P."/>
            <person name="Lucas S.M."/>
            <person name="Myers R.M."/>
            <person name="Rubin E.M."/>
        </authorList>
    </citation>
    <scope>NUCLEOTIDE SEQUENCE [LARGE SCALE GENOMIC DNA]</scope>
</reference>
<reference key="4">
    <citation type="journal article" date="2004" name="Genome Res.">
        <title>The status, quality, and expansion of the NIH full-length cDNA project: the Mammalian Gene Collection (MGC).</title>
        <authorList>
            <consortium name="The MGC Project Team"/>
        </authorList>
    </citation>
    <scope>NUCLEOTIDE SEQUENCE [LARGE SCALE MRNA] (ISOFORMS 1 AND 6)</scope>
    <scope>VARIANTS GLN-284 AND GLN-1640</scope>
    <source>
        <tissue>Brain</tissue>
        <tissue>Kidney</tissue>
    </source>
</reference>
<reference key="5">
    <citation type="journal article" date="1999" name="J. Biol. Chem.">
        <title>Interaction of c-Jun amino-terminal kinase interacting protein-1 with p190 rhoGEF and its localization in differentiated neurons.</title>
        <authorList>
            <person name="Meyer D."/>
            <person name="Liu A."/>
            <person name="Margolis B."/>
        </authorList>
    </citation>
    <scope>INTERACTION WITH MAPK8IP1</scope>
</reference>
<reference key="6">
    <citation type="journal article" date="2008" name="J. Biol. Chem.">
        <title>Delta-catenin-induced dendritic morphogenesis. An essential role of p190RhoGEF interaction through Akt1-mediated phosphorylation.</title>
        <authorList>
            <person name="Kim H."/>
            <person name="Han J.-R."/>
            <person name="Park J."/>
            <person name="Oh M."/>
            <person name="James S.E."/>
            <person name="Chang S."/>
            <person name="Lu Q."/>
            <person name="Lee K.Y."/>
            <person name="Ki H."/>
            <person name="Song W.-J."/>
            <person name="Kim K."/>
        </authorList>
    </citation>
    <scope>INTERACTION WITH CTNND2</scope>
</reference>
<reference key="7">
    <citation type="journal article" date="2008" name="Proc. Natl. Acad. Sci. U.S.A.">
        <title>A quantitative atlas of mitotic phosphorylation.</title>
        <authorList>
            <person name="Dephoure N."/>
            <person name="Zhou C."/>
            <person name="Villen J."/>
            <person name="Beausoleil S.A."/>
            <person name="Bakalarski C.E."/>
            <person name="Elledge S.J."/>
            <person name="Gygi S.P."/>
        </authorList>
    </citation>
    <scope>PHOSPHORYLATION [LARGE SCALE ANALYSIS] AT SER-624</scope>
    <scope>IDENTIFICATION BY MASS SPECTROMETRY [LARGE SCALE ANALYSIS]</scope>
    <source>
        <tissue>Cervix carcinoma</tissue>
    </source>
</reference>
<reference key="8">
    <citation type="journal article" date="2014" name="J. Proteomics">
        <title>An enzyme assisted RP-RPLC approach for in-depth analysis of human liver phosphoproteome.</title>
        <authorList>
            <person name="Bian Y."/>
            <person name="Song C."/>
            <person name="Cheng K."/>
            <person name="Dong M."/>
            <person name="Wang F."/>
            <person name="Huang J."/>
            <person name="Sun D."/>
            <person name="Wang L."/>
            <person name="Ye M."/>
            <person name="Zou H."/>
        </authorList>
    </citation>
    <scope>PHOSPHORYLATION [LARGE SCALE ANALYSIS] AT SER-1538</scope>
    <scope>IDENTIFICATION BY MASS SPECTROMETRY [LARGE SCALE ANALYSIS]</scope>
    <source>
        <tissue>Liver</tissue>
    </source>
</reference>
<sequence>MELSCSEAPLYGQMMIYAKFDKNVYLPEDAEFYFTYDGSHQRHVMIAERIEDNVLQSSVPGHGLQETVTVSVCLCSEGYSPVTMGSGSVTYVDNMACRLARLLVTQANRLTACSHQTLLTPFALTAGALPALDEELVLALTHLELPLEWTVLGSSSLEVSSHRESLLHLAMRWGLAKLSQFFLCLPGGVQALALPNEEGATPLDLALREGHSKLVEDVTNFQGRWSPSFSRVQLSEEASLHYIHSSETLTLTLNHTAEHLLEADIKLFRKYFWDRAFLVKAFEPEARPEERTAMPSSGAETEEEIKNSVSSRSAAEKEDIKRVKSLVVQHNEHEDQHSLDLDRSFDILKKSKPPSTLLAAGRLSDMLNGGDEVYANCMVIDQVGDLDISYINIEGITATTSPESRGCTLWPQSSKHTLPTETSPSVYPLSENVEGTAHTEAQQSFMSPSSSCASNLNLSFGWHGFEKEQSHLKKRSSSLDALDADSEGEGHSEPSHICYTPGSQSSSRTGIPSGDELDSFETNTEPDFNISRAESLPLSSNLQSKESLLSGVRSRSYSCSSPKISLGKTRLVRELTVCSSSEEQRAYSLSEPPRENRIQEEEWDKYIIPAKSESEKYKVSRTFSFLMNRMTSPRNKSKTKSKDAKDKEKLNRHQFAPGTFSGVLQCLVCDKTLLGKESLQCSNCNANVHKGCKDAAPACTKKFQEKYNKNKPQTILGNSSFRDIPQPGLSLHPSSSVPVGLPTGRRETVGQVHPLSRSVPGTTLESFRRSATSLESESDHNSCRSRSHSDELLQSMGSSPSTESFIMEDVVDSSLWSDLSSDAQEFEAESWSLVVDPSFCNRQEKDVIKRQDVIFELMQTEMHHIQTLFIMSEIFRKGMKEELQLDHSTVDKIFPCLDELLEIHRHFFYSMKERRQESCAGSDRNFVIDRIGDILVQQFSEENASKMKKIYGEFCCHHKEAVNLFKELQQNKKFQNFIKLRNSNLLARRRGIPECILLVTQRITKYPVLVERILQYTKERTEEHKDLRKALCLIKDMIATVDLKVNEYEKNQKWLEILNKIENKTYTKLKNGHVFRKQALMSEERTLLYDGLVYWKTATGRFKDILALLLTDVLLFLQEKDQKYIFAAVDQKPSVISLQKLIAREVANEERGMFLISASSAGPEMYEIHTNSKEERNNWMRRIQQAVESCPEEKGGRTSESDEDKRKAEARVAKIQQCQEILTNQDQQICAYLEEKLHIYAELGELSGFEDVHLEPHLLIKPDPGEPPQAASLLAAALKEAESLQVAVKASQMGAVSQSCEDSCGDSVLADTLSSHDVPGSPTASLVTGGREGRGCSDVDPGIQGVVTDLAVSDAGEKVECRNFPGSSQSEIIQAIQNLTRLLYSLQAALTIQDSHIEIHRLVLQQQEGLSLGHSILRGGPLQDQKSRDADRQHEELANVHQLQHQLQQEQRRWLRRCEQQQRAQATRESWLQERERECQSQEELLLRSRGELDLQLQEYQHSLERLREGQRLVEREQARMRAQQSLLGHWKHGRQRSLPAVLLPGGPEVMELNRSESLCHENSFFINEALVQMSFNTFNKLNPSVIHQDATYPTTQSHSDLVRTSEHQVDLKVDPSQPSNVSHKLWTAAGSGHQILPFHESSKDSCKNDLDTSHTESPTPHDSNSHRPQLQAFITEAKLNLPTRTMTRQDGETGDGAKENIVYL</sequence>
<evidence type="ECO:0000250" key="1"/>
<evidence type="ECO:0000250" key="2">
    <source>
        <dbReference type="UniProtKB" id="P0C6P5"/>
    </source>
</evidence>
<evidence type="ECO:0000255" key="3"/>
<evidence type="ECO:0000255" key="4">
    <source>
        <dbReference type="PROSITE-ProRule" id="PRU00062"/>
    </source>
</evidence>
<evidence type="ECO:0000255" key="5">
    <source>
        <dbReference type="PROSITE-ProRule" id="PRU00145"/>
    </source>
</evidence>
<evidence type="ECO:0000255" key="6">
    <source>
        <dbReference type="PROSITE-ProRule" id="PRU00226"/>
    </source>
</evidence>
<evidence type="ECO:0000256" key="7">
    <source>
        <dbReference type="SAM" id="MobiDB-lite"/>
    </source>
</evidence>
<evidence type="ECO:0000269" key="8">
    <source>
    </source>
</evidence>
<evidence type="ECO:0000269" key="9">
    <source>
    </source>
</evidence>
<evidence type="ECO:0000269" key="10">
    <source>
    </source>
</evidence>
<evidence type="ECO:0000269" key="11">
    <source>
    </source>
</evidence>
<evidence type="ECO:0000303" key="12">
    <source>
    </source>
</evidence>
<evidence type="ECO:0000303" key="13">
    <source>
    </source>
</evidence>
<evidence type="ECO:0000303" key="14">
    <source>
    </source>
</evidence>
<evidence type="ECO:0000305" key="15"/>
<evidence type="ECO:0007744" key="16">
    <source>
    </source>
</evidence>
<evidence type="ECO:0007744" key="17">
    <source>
    </source>
</evidence>
<evidence type="ECO:0007829" key="18">
    <source>
        <dbReference type="PDB" id="6BC0"/>
    </source>
</evidence>
<proteinExistence type="evidence at protein level"/>
<accession>Q8N1W1</accession>
<accession>B2RXG7</accession>
<accession>B4E3K4</accession>
<accession>B5MDA3</accession>
<accession>B7ZW32</accession>
<accession>E9PC75</accession>
<accession>Q8NCM7</accession>
<accession>Q96E37</accession>
<accession>Q9H6L3</accession>
<accession>Q9H6W0</accession>
<gene>
    <name type="primary">ARHGEF28</name>
    <name type="synonym">KIAA1998</name>
    <name type="synonym">RGNEF</name>
</gene>
<keyword id="KW-0002">3D-structure</keyword>
<keyword id="KW-0025">Alternative splicing</keyword>
<keyword id="KW-1003">Cell membrane</keyword>
<keyword id="KW-0175">Coiled coil</keyword>
<keyword id="KW-0963">Cytoplasm</keyword>
<keyword id="KW-0221">Differentiation</keyword>
<keyword id="KW-0344">Guanine-nucleotide releasing factor</keyword>
<keyword id="KW-0472">Membrane</keyword>
<keyword id="KW-0479">Metal-binding</keyword>
<keyword id="KW-0597">Phosphoprotein</keyword>
<keyword id="KW-1267">Proteomics identification</keyword>
<keyword id="KW-1185">Reference proteome</keyword>
<keyword id="KW-0694">RNA-binding</keyword>
<keyword id="KW-0862">Zinc</keyword>
<keyword id="KW-0863">Zinc-finger</keyword>